<dbReference type="EC" id="3.6.4.13"/>
<dbReference type="EMBL" id="CH981526">
    <property type="protein sequence ID" value="EDK44554.1"/>
    <property type="molecule type" value="Genomic_DNA"/>
</dbReference>
<dbReference type="RefSeq" id="XP_001526175.1">
    <property type="nucleotide sequence ID" value="XM_001526125.1"/>
</dbReference>
<dbReference type="SMR" id="A5DZE6"/>
<dbReference type="FunCoup" id="A5DZE6">
    <property type="interactions" value="1290"/>
</dbReference>
<dbReference type="STRING" id="379508.A5DZE6"/>
<dbReference type="GeneID" id="5233527"/>
<dbReference type="KEGG" id="lel:PVL30_003577"/>
<dbReference type="VEuPathDB" id="FungiDB:LELG_02733"/>
<dbReference type="eggNOG" id="KOG0335">
    <property type="taxonomic scope" value="Eukaryota"/>
</dbReference>
<dbReference type="HOGENOM" id="CLU_003041_16_3_1"/>
<dbReference type="InParanoid" id="A5DZE6"/>
<dbReference type="OMA" id="CYRSWVR"/>
<dbReference type="OrthoDB" id="196131at2759"/>
<dbReference type="Proteomes" id="UP000001996">
    <property type="component" value="Unassembled WGS sequence"/>
</dbReference>
<dbReference type="GO" id="GO:0010494">
    <property type="term" value="C:cytoplasmic stress granule"/>
    <property type="evidence" value="ECO:0007669"/>
    <property type="project" value="EnsemblFungi"/>
</dbReference>
<dbReference type="GO" id="GO:0005681">
    <property type="term" value="C:spliceosomal complex"/>
    <property type="evidence" value="ECO:0007669"/>
    <property type="project" value="EnsemblFungi"/>
</dbReference>
<dbReference type="GO" id="GO:0005524">
    <property type="term" value="F:ATP binding"/>
    <property type="evidence" value="ECO:0007669"/>
    <property type="project" value="UniProtKB-KW"/>
</dbReference>
<dbReference type="GO" id="GO:0016887">
    <property type="term" value="F:ATP hydrolysis activity"/>
    <property type="evidence" value="ECO:0007669"/>
    <property type="project" value="RHEA"/>
</dbReference>
<dbReference type="GO" id="GO:0031370">
    <property type="term" value="F:eukaryotic initiation factor 4G binding"/>
    <property type="evidence" value="ECO:0007669"/>
    <property type="project" value="EnsemblFungi"/>
</dbReference>
<dbReference type="GO" id="GO:0051880">
    <property type="term" value="F:G-quadruplex DNA binding"/>
    <property type="evidence" value="ECO:0007669"/>
    <property type="project" value="EnsemblFungi"/>
</dbReference>
<dbReference type="GO" id="GO:0002151">
    <property type="term" value="F:G-quadruplex RNA binding"/>
    <property type="evidence" value="ECO:0007669"/>
    <property type="project" value="EnsemblFungi"/>
</dbReference>
<dbReference type="GO" id="GO:0003729">
    <property type="term" value="F:mRNA binding"/>
    <property type="evidence" value="ECO:0007669"/>
    <property type="project" value="EnsemblFungi"/>
</dbReference>
<dbReference type="GO" id="GO:0003724">
    <property type="term" value="F:RNA helicase activity"/>
    <property type="evidence" value="ECO:0007669"/>
    <property type="project" value="UniProtKB-EC"/>
</dbReference>
<dbReference type="GO" id="GO:0033592">
    <property type="term" value="F:RNA strand annealing activity"/>
    <property type="evidence" value="ECO:0007669"/>
    <property type="project" value="EnsemblFungi"/>
</dbReference>
<dbReference type="GO" id="GO:0003743">
    <property type="term" value="F:translation initiation factor activity"/>
    <property type="evidence" value="ECO:0007669"/>
    <property type="project" value="UniProtKB-KW"/>
</dbReference>
<dbReference type="GO" id="GO:0002183">
    <property type="term" value="P:cytoplasmic translational initiation"/>
    <property type="evidence" value="ECO:0007669"/>
    <property type="project" value="EnsemblFungi"/>
</dbReference>
<dbReference type="GO" id="GO:1990625">
    <property type="term" value="P:negative regulation of cytoplasmic translational initiation in response to stress"/>
    <property type="evidence" value="ECO:0007669"/>
    <property type="project" value="EnsemblFungi"/>
</dbReference>
<dbReference type="GO" id="GO:1901195">
    <property type="term" value="P:positive regulation of formation of translation preinitiation complex"/>
    <property type="evidence" value="ECO:0007669"/>
    <property type="project" value="EnsemblFungi"/>
</dbReference>
<dbReference type="GO" id="GO:0031047">
    <property type="term" value="P:regulatory ncRNA-mediated gene silencing"/>
    <property type="evidence" value="ECO:0007669"/>
    <property type="project" value="EnsemblFungi"/>
</dbReference>
<dbReference type="GO" id="GO:0000390">
    <property type="term" value="P:spliceosomal complex disassembly"/>
    <property type="evidence" value="ECO:0007669"/>
    <property type="project" value="EnsemblFungi"/>
</dbReference>
<dbReference type="CDD" id="cd18787">
    <property type="entry name" value="SF2_C_DEAD"/>
    <property type="match status" value="1"/>
</dbReference>
<dbReference type="FunFam" id="3.40.50.300:FF:000160">
    <property type="entry name" value="ATP-dependent RNA helicase DDX3X"/>
    <property type="match status" value="1"/>
</dbReference>
<dbReference type="FunFam" id="3.40.50.300:FF:000008">
    <property type="entry name" value="ATP-dependent RNA helicase RhlB"/>
    <property type="match status" value="1"/>
</dbReference>
<dbReference type="Gene3D" id="3.40.50.300">
    <property type="entry name" value="P-loop containing nucleotide triphosphate hydrolases"/>
    <property type="match status" value="2"/>
</dbReference>
<dbReference type="InterPro" id="IPR011545">
    <property type="entry name" value="DEAD/DEAH_box_helicase_dom"/>
</dbReference>
<dbReference type="InterPro" id="IPR014001">
    <property type="entry name" value="Helicase_ATP-bd"/>
</dbReference>
<dbReference type="InterPro" id="IPR001650">
    <property type="entry name" value="Helicase_C-like"/>
</dbReference>
<dbReference type="InterPro" id="IPR027417">
    <property type="entry name" value="P-loop_NTPase"/>
</dbReference>
<dbReference type="InterPro" id="IPR000629">
    <property type="entry name" value="RNA-helicase_DEAD-box_CS"/>
</dbReference>
<dbReference type="InterPro" id="IPR014014">
    <property type="entry name" value="RNA_helicase_DEAD_Q_motif"/>
</dbReference>
<dbReference type="PANTHER" id="PTHR47958">
    <property type="entry name" value="ATP-DEPENDENT RNA HELICASE DBP3"/>
    <property type="match status" value="1"/>
</dbReference>
<dbReference type="Pfam" id="PF00270">
    <property type="entry name" value="DEAD"/>
    <property type="match status" value="1"/>
</dbReference>
<dbReference type="Pfam" id="PF00271">
    <property type="entry name" value="Helicase_C"/>
    <property type="match status" value="1"/>
</dbReference>
<dbReference type="SMART" id="SM00487">
    <property type="entry name" value="DEXDc"/>
    <property type="match status" value="1"/>
</dbReference>
<dbReference type="SMART" id="SM00490">
    <property type="entry name" value="HELICc"/>
    <property type="match status" value="1"/>
</dbReference>
<dbReference type="SUPFAM" id="SSF52540">
    <property type="entry name" value="P-loop containing nucleoside triphosphate hydrolases"/>
    <property type="match status" value="1"/>
</dbReference>
<dbReference type="PROSITE" id="PS00039">
    <property type="entry name" value="DEAD_ATP_HELICASE"/>
    <property type="match status" value="1"/>
</dbReference>
<dbReference type="PROSITE" id="PS51192">
    <property type="entry name" value="HELICASE_ATP_BIND_1"/>
    <property type="match status" value="1"/>
</dbReference>
<dbReference type="PROSITE" id="PS51194">
    <property type="entry name" value="HELICASE_CTER"/>
    <property type="match status" value="1"/>
</dbReference>
<dbReference type="PROSITE" id="PS51195">
    <property type="entry name" value="Q_MOTIF"/>
    <property type="match status" value="1"/>
</dbReference>
<organism>
    <name type="scientific">Lodderomyces elongisporus (strain ATCC 11503 / CBS 2605 / JCM 1781 / NBRC 1676 / NRRL YB-4239)</name>
    <name type="common">Yeast</name>
    <name type="synonym">Saccharomyces elongisporus</name>
    <dbReference type="NCBI Taxonomy" id="379508"/>
    <lineage>
        <taxon>Eukaryota</taxon>
        <taxon>Fungi</taxon>
        <taxon>Dikarya</taxon>
        <taxon>Ascomycota</taxon>
        <taxon>Saccharomycotina</taxon>
        <taxon>Pichiomycetes</taxon>
        <taxon>Debaryomycetaceae</taxon>
        <taxon>Candida/Lodderomyces clade</taxon>
        <taxon>Lodderomyces</taxon>
    </lineage>
</organism>
<evidence type="ECO:0000250" key="1"/>
<evidence type="ECO:0000255" key="2">
    <source>
        <dbReference type="PROSITE-ProRule" id="PRU00541"/>
    </source>
</evidence>
<evidence type="ECO:0000255" key="3">
    <source>
        <dbReference type="PROSITE-ProRule" id="PRU00542"/>
    </source>
</evidence>
<evidence type="ECO:0000256" key="4">
    <source>
        <dbReference type="SAM" id="MobiDB-lite"/>
    </source>
</evidence>
<evidence type="ECO:0000305" key="5"/>
<reference key="1">
    <citation type="journal article" date="2009" name="Nature">
        <title>Evolution of pathogenicity and sexual reproduction in eight Candida genomes.</title>
        <authorList>
            <person name="Butler G."/>
            <person name="Rasmussen M.D."/>
            <person name="Lin M.F."/>
            <person name="Santos M.A.S."/>
            <person name="Sakthikumar S."/>
            <person name="Munro C.A."/>
            <person name="Rheinbay E."/>
            <person name="Grabherr M."/>
            <person name="Forche A."/>
            <person name="Reedy J.L."/>
            <person name="Agrafioti I."/>
            <person name="Arnaud M.B."/>
            <person name="Bates S."/>
            <person name="Brown A.J.P."/>
            <person name="Brunke S."/>
            <person name="Costanzo M.C."/>
            <person name="Fitzpatrick D.A."/>
            <person name="de Groot P.W.J."/>
            <person name="Harris D."/>
            <person name="Hoyer L.L."/>
            <person name="Hube B."/>
            <person name="Klis F.M."/>
            <person name="Kodira C."/>
            <person name="Lennard N."/>
            <person name="Logue M.E."/>
            <person name="Martin R."/>
            <person name="Neiman A.M."/>
            <person name="Nikolaou E."/>
            <person name="Quail M.A."/>
            <person name="Quinn J."/>
            <person name="Santos M.C."/>
            <person name="Schmitzberger F.F."/>
            <person name="Sherlock G."/>
            <person name="Shah P."/>
            <person name="Silverstein K.A.T."/>
            <person name="Skrzypek M.S."/>
            <person name="Soll D."/>
            <person name="Staggs R."/>
            <person name="Stansfield I."/>
            <person name="Stumpf M.P.H."/>
            <person name="Sudbery P.E."/>
            <person name="Srikantha T."/>
            <person name="Zeng Q."/>
            <person name="Berman J."/>
            <person name="Berriman M."/>
            <person name="Heitman J."/>
            <person name="Gow N.A.R."/>
            <person name="Lorenz M.C."/>
            <person name="Birren B.W."/>
            <person name="Kellis M."/>
            <person name="Cuomo C.A."/>
        </authorList>
    </citation>
    <scope>NUCLEOTIDE SEQUENCE [LARGE SCALE GENOMIC DNA]</scope>
    <source>
        <strain>ATCC 11503 / BCRC 21390 / CBS 2605 / JCM 1781 / NBRC 1676 / NRRL YB-4239</strain>
    </source>
</reference>
<name>DED1_LODEL</name>
<proteinExistence type="inferred from homology"/>
<protein>
    <recommendedName>
        <fullName>ATP-dependent RNA helicase DED1</fullName>
        <ecNumber>3.6.4.13</ecNumber>
    </recommendedName>
</protein>
<sequence length="664" mass="71196">MSDISQQMNNLSVQDNNKPNGNGYSGQPQQQSGRRQYVPPHLRNRSSHQPSSNGANGDIPFGGSRRSDYGGGRGGFGFGGGSNGGGSGPSGGYRNGGARGGSRGGFGGGRYQRPTPGVGRWVDGKHEPAPRNDRLELELFGVAEDTLFQSSGINFDNYDDIPVEASGEGVPEPINSFTAPPLDELLVENIKLSRFTKPTPVQKYSVPIVAAGRDLMACAQTGSGKTGGFLFPVLSESYMNGPAPIPESTGAFSSHKVYPTILVMAPTRELVSQIYDESKKFAYRSWVRPCVVYGGADIGNQIRQLDRGCDLLVATPGRLKDLLERGRVSLANIKYLVLDEADRMLDMGFEPQIRHIVQECDMPDVQDRQTLMFSATFPRDIQMLARDFLKDYIFLSVGRVGSTSENITQKVLYVEDEEKKSVILDLLNANSEGLTIVFTETKRMADNLADFLYDQGFPATAIHGDRSQYEREKALAAFKSGQAPILVATAVAARGLDIPNVSHVINYDLPSDIDDYVHRIGRTGRAGNVGIATAFFNRNNKNIVKGMLDLLTEANQEVPDFLNKIARESAFGRPGRGSSRGGGAGGFGGSRGGANRDFRRAGGASGSSSSGWGNSSSSGWGGSGNSGWGNSNGYSNGGGSYGGSRSSFNDNSSYGNPSSQNSWW</sequence>
<accession>A5DZE6</accession>
<keyword id="KW-0067">ATP-binding</keyword>
<keyword id="KW-0963">Cytoplasm</keyword>
<keyword id="KW-0347">Helicase</keyword>
<keyword id="KW-0378">Hydrolase</keyword>
<keyword id="KW-0396">Initiation factor</keyword>
<keyword id="KW-0547">Nucleotide-binding</keyword>
<keyword id="KW-0648">Protein biosynthesis</keyword>
<keyword id="KW-1185">Reference proteome</keyword>
<keyword id="KW-0694">RNA-binding</keyword>
<comment type="function">
    <text evidence="1">ATP-binding RNA helicase involved in translation initiation. Remodels RNA in response to ADP and ATP concentrations by facilitating disruption, but also formation of RNA duplexes (By similarity).</text>
</comment>
<comment type="catalytic activity">
    <reaction>
        <text>ATP + H2O = ADP + phosphate + H(+)</text>
        <dbReference type="Rhea" id="RHEA:13065"/>
        <dbReference type="ChEBI" id="CHEBI:15377"/>
        <dbReference type="ChEBI" id="CHEBI:15378"/>
        <dbReference type="ChEBI" id="CHEBI:30616"/>
        <dbReference type="ChEBI" id="CHEBI:43474"/>
        <dbReference type="ChEBI" id="CHEBI:456216"/>
        <dbReference type="EC" id="3.6.4.13"/>
    </reaction>
</comment>
<comment type="subcellular location">
    <subcellularLocation>
        <location evidence="1">Cytoplasm</location>
    </subcellularLocation>
</comment>
<comment type="domain">
    <text>The Q motif is unique to and characteristic of the DEAD box family of RNA helicases and controls ATP binding and hydrolysis.</text>
</comment>
<comment type="similarity">
    <text evidence="5">Belongs to the DEAD box helicase family. DDX3/DED1 subfamily.</text>
</comment>
<gene>
    <name type="primary">DED1</name>
    <name type="ORF">LELG_02733</name>
</gene>
<feature type="chain" id="PRO_0000294611" description="ATP-dependent RNA helicase DED1">
    <location>
        <begin position="1"/>
        <end position="664"/>
    </location>
</feature>
<feature type="domain" description="Helicase ATP-binding" evidence="2">
    <location>
        <begin position="206"/>
        <end position="395"/>
    </location>
</feature>
<feature type="domain" description="Helicase C-terminal" evidence="3">
    <location>
        <begin position="406"/>
        <end position="566"/>
    </location>
</feature>
<feature type="region of interest" description="Disordered" evidence="4">
    <location>
        <begin position="1"/>
        <end position="129"/>
    </location>
</feature>
<feature type="region of interest" description="Disordered" evidence="4">
    <location>
        <begin position="569"/>
        <end position="664"/>
    </location>
</feature>
<feature type="short sequence motif" description="Q motif">
    <location>
        <begin position="175"/>
        <end position="203"/>
    </location>
</feature>
<feature type="short sequence motif" description="DEAD box">
    <location>
        <begin position="339"/>
        <end position="342"/>
    </location>
</feature>
<feature type="compositionally biased region" description="Polar residues" evidence="4">
    <location>
        <begin position="1"/>
        <end position="18"/>
    </location>
</feature>
<feature type="compositionally biased region" description="Low complexity" evidence="4">
    <location>
        <begin position="19"/>
        <end position="37"/>
    </location>
</feature>
<feature type="compositionally biased region" description="Gly residues" evidence="4">
    <location>
        <begin position="69"/>
        <end position="110"/>
    </location>
</feature>
<feature type="compositionally biased region" description="Gly residues" evidence="4">
    <location>
        <begin position="574"/>
        <end position="592"/>
    </location>
</feature>
<feature type="compositionally biased region" description="Low complexity" evidence="4">
    <location>
        <begin position="606"/>
        <end position="618"/>
    </location>
</feature>
<feature type="compositionally biased region" description="Polar residues" evidence="4">
    <location>
        <begin position="648"/>
        <end position="664"/>
    </location>
</feature>
<feature type="binding site" evidence="2">
    <location>
        <begin position="219"/>
        <end position="226"/>
    </location>
    <ligand>
        <name>ATP</name>
        <dbReference type="ChEBI" id="CHEBI:30616"/>
    </ligand>
</feature>